<organism>
    <name type="scientific">Methanobacterium formicicum</name>
    <dbReference type="NCBI Taxonomy" id="2162"/>
    <lineage>
        <taxon>Archaea</taxon>
        <taxon>Methanobacteriati</taxon>
        <taxon>Methanobacteriota</taxon>
        <taxon>Methanomada group</taxon>
        <taxon>Methanobacteria</taxon>
        <taxon>Methanobacteriales</taxon>
        <taxon>Methanobacteriaceae</taxon>
        <taxon>Methanobacterium</taxon>
    </lineage>
</organism>
<keyword id="KW-0158">Chromosome</keyword>
<keyword id="KW-0963">Cytoplasm</keyword>
<keyword id="KW-0903">Direct protein sequencing</keyword>
<keyword id="KW-0238">DNA-binding</keyword>
<accession>P48782</accession>
<evidence type="ECO:0000250" key="1">
    <source>
        <dbReference type="UniProtKB" id="P19267"/>
    </source>
</evidence>
<evidence type="ECO:0000305" key="2"/>
<evidence type="ECO:0000305" key="3">
    <source>
    </source>
</evidence>
<reference key="1">
    <citation type="journal article" date="1995" name="J. Bacteriol.">
        <title>Methanobacterium formicicum, a mesophilic methanogen, contains three HFo histones.</title>
        <authorList>
            <person name="Darcy T.J."/>
            <person name="Sandman K.M."/>
            <person name="Reeve J.N."/>
        </authorList>
    </citation>
    <scope>NUCLEOTIDE SEQUENCE [GENOMIC DNA]</scope>
    <scope>PARTIAL PROTEIN SEQUENCE</scope>
    <scope>FUNCTION</scope>
    <scope>SUBUNIT</scope>
    <source>
        <strain>JF-1</strain>
    </source>
</reference>
<protein>
    <recommendedName>
        <fullName>Archaeal histone A1</fullName>
    </recommendedName>
</protein>
<gene>
    <name type="primary">hfoA1</name>
</gene>
<proteinExistence type="evidence at protein level"/>
<dbReference type="EMBL" id="U12930">
    <property type="protein sequence ID" value="AAA67721.1"/>
    <property type="molecule type" value="Genomic_DNA"/>
</dbReference>
<dbReference type="RefSeq" id="WP_048072231.1">
    <property type="nucleotide sequence ID" value="NZ_LN734822.1"/>
</dbReference>
<dbReference type="SMR" id="P48782"/>
<dbReference type="STRING" id="2162.BRM9_0620"/>
<dbReference type="GeneID" id="82850862"/>
<dbReference type="OrthoDB" id="7514at2157"/>
<dbReference type="GO" id="GO:0005694">
    <property type="term" value="C:chromosome"/>
    <property type="evidence" value="ECO:0007669"/>
    <property type="project" value="UniProtKB-SubCell"/>
</dbReference>
<dbReference type="GO" id="GO:0005737">
    <property type="term" value="C:cytoplasm"/>
    <property type="evidence" value="ECO:0007669"/>
    <property type="project" value="UniProtKB-SubCell"/>
</dbReference>
<dbReference type="GO" id="GO:0003677">
    <property type="term" value="F:DNA binding"/>
    <property type="evidence" value="ECO:0007669"/>
    <property type="project" value="UniProtKB-KW"/>
</dbReference>
<dbReference type="GO" id="GO:0046982">
    <property type="term" value="F:protein heterodimerization activity"/>
    <property type="evidence" value="ECO:0007669"/>
    <property type="project" value="InterPro"/>
</dbReference>
<dbReference type="CDD" id="cd22909">
    <property type="entry name" value="HFD_archaea_histone-like"/>
    <property type="match status" value="1"/>
</dbReference>
<dbReference type="Gene3D" id="1.10.20.10">
    <property type="entry name" value="Histone, subunit A"/>
    <property type="match status" value="1"/>
</dbReference>
<dbReference type="InterPro" id="IPR050947">
    <property type="entry name" value="Archaeal_histone_HMF"/>
</dbReference>
<dbReference type="InterPro" id="IPR003958">
    <property type="entry name" value="CBFA_NFYB_domain"/>
</dbReference>
<dbReference type="InterPro" id="IPR009072">
    <property type="entry name" value="Histone-fold"/>
</dbReference>
<dbReference type="InterPro" id="IPR050004">
    <property type="entry name" value="HmfB-like"/>
</dbReference>
<dbReference type="NCBIfam" id="NF043032">
    <property type="entry name" value="archaea_histone"/>
    <property type="match status" value="1"/>
</dbReference>
<dbReference type="PANTHER" id="PTHR47828">
    <property type="entry name" value="ARCHAEAL HISTONE A"/>
    <property type="match status" value="1"/>
</dbReference>
<dbReference type="PANTHER" id="PTHR47828:SF1">
    <property type="entry name" value="ARCHAEAL HISTONE A"/>
    <property type="match status" value="1"/>
</dbReference>
<dbReference type="Pfam" id="PF00808">
    <property type="entry name" value="CBFD_NFYB_HMF"/>
    <property type="match status" value="1"/>
</dbReference>
<dbReference type="SUPFAM" id="SSF47113">
    <property type="entry name" value="Histone-fold"/>
    <property type="match status" value="1"/>
</dbReference>
<name>HFO1_METFO</name>
<feature type="initiator methionine" description="Removed">
    <location>
        <position position="1"/>
    </location>
</feature>
<feature type="chain" id="PRO_0000154984" description="Archaeal histone A1">
    <location>
        <begin position="2"/>
        <end position="68"/>
    </location>
</feature>
<feature type="region of interest" description="Interaction with DNA" evidence="1">
    <location>
        <begin position="20"/>
        <end position="22"/>
    </location>
</feature>
<feature type="region of interest" description="Interaction with DNA" evidence="1">
    <location>
        <begin position="54"/>
        <end position="57"/>
    </location>
</feature>
<feature type="site" description="Interaction with DNA" evidence="1">
    <location>
        <position position="14"/>
    </location>
</feature>
<sequence>MAELPIAPVGRIIKNAGAPRVSDDARDALAKVLEEMGEGIAAEAVKLAKHAGRKTVKASDIEMAVKAA</sequence>
<comment type="function">
    <text evidence="3">Binds and compact DNA (95 to 150 base pairs) to form nucleosome-like structures that contain positive DNA supercoils. Increases the resistance of DNA to thermal denaturation (in vitro).</text>
</comment>
<comment type="subunit">
    <text evidence="1 3">Homodimer or heterodimer with another histone (PubMed:7836329). Dimers then assemble into higher oligomers, with the DNA wrapped around the protein core (By similarity).</text>
</comment>
<comment type="subcellular location">
    <subcellularLocation>
        <location evidence="2">Cytoplasm</location>
    </subcellularLocation>
    <subcellularLocation>
        <location evidence="2">Chromosome</location>
    </subcellularLocation>
</comment>
<comment type="similarity">
    <text evidence="2">Belongs to the archaeal histone HMF family.</text>
</comment>